<comment type="function">
    <text evidence="1">Forms an icosahedral capsid with a T=7 symmetry and a 50 nm diameter. The capsid is composed of 72 pentamers linked to each other by disulfide bonds and associated with L2 proteins. Binds to heparan sulfate proteoglycans on cell surface of basal layer keratinocytes to provide initial virion attachment. This binding mediates a conformational change in the virus capsid that facilitates efficient infection. The virion enters the host cell via endocytosis. During virus trafficking, L1 protein dissociates from the viral DNA and the genomic DNA is released to the host nucleus. The virion assembly takes place within the cell nucleus. Encapsulates the genomic DNA together with protein L2.</text>
</comment>
<comment type="subunit">
    <text evidence="1">Self-assembles into homopentamers. The capsid has an icosahedral symmetry and consists of 72 capsomers, with each capsomer being a pentamer of L1. Interacts with the minor capsid protein L2; this interaction is necessary for viral genome encapsidation. Interacts with protein E2; this interaction enhances E2-dependent replication and transcription activation.</text>
</comment>
<comment type="subcellular location">
    <subcellularLocation>
        <location evidence="1">Virion</location>
    </subcellularLocation>
    <subcellularLocation>
        <location evidence="1">Host nucleus</location>
    </subcellularLocation>
</comment>
<comment type="similarity">
    <text evidence="1">Belongs to the papillomaviridae L1 protein family.</text>
</comment>
<feature type="chain" id="PRO_0000133529" description="Major capsid protein L1">
    <location>
        <begin position="1"/>
        <end position="539"/>
    </location>
</feature>
<feature type="region of interest" description="Disordered" evidence="2">
    <location>
        <begin position="505"/>
        <end position="539"/>
    </location>
</feature>
<feature type="compositionally biased region" description="Basic residues" evidence="2">
    <location>
        <begin position="505"/>
        <end position="516"/>
    </location>
</feature>
<feature type="compositionally biased region" description="Low complexity" evidence="2">
    <location>
        <begin position="517"/>
        <end position="528"/>
    </location>
</feature>
<feature type="compositionally biased region" description="Basic residues" evidence="2">
    <location>
        <begin position="529"/>
        <end position="539"/>
    </location>
</feature>
<feature type="disulfide bond" description="Interchain (with C-458)" evidence="1">
    <location>
        <position position="202"/>
    </location>
</feature>
<feature type="disulfide bond" description="Interchain (with C-202)" evidence="1">
    <location>
        <position position="458"/>
    </location>
</feature>
<name>VL1_HPV45</name>
<reference key="1">
    <citation type="journal article" date="1994" name="Curr. Top. Microbiol. Immunol.">
        <title>Primer-directed sequencing of human papillomavirus types.</title>
        <authorList>
            <person name="Delius H."/>
            <person name="Hofmann B."/>
        </authorList>
    </citation>
    <scope>NUCLEOTIDE SEQUENCE [GENOMIC DNA]</scope>
</reference>
<reference key="2">
    <citation type="journal article" date="1992" name="J. Clin. Microbiol.">
        <title>General primer polymerase chain reaction in combination with sequence analysis for identification of potentially novel human papillomavirus genotypes in cervical lesions.</title>
        <authorList>
            <person name="van den Brule A.J."/>
            <person name="Snijders P.J."/>
            <person name="Raaphorst P.M."/>
            <person name="Schrijnemakers H.F."/>
            <person name="Delius H."/>
            <person name="Gissmann L."/>
            <person name="Meijer C.J."/>
            <person name="Walboomers J.M."/>
        </authorList>
    </citation>
    <scope>NUCLEOTIDE SEQUENCE [GENOMIC DNA] OF 366-399</scope>
</reference>
<accession>P36741</accession>
<accession>Q90080</accession>
<dbReference type="EMBL" id="X74479">
    <property type="protein sequence ID" value="CAA52578.1"/>
    <property type="molecule type" value="Genomic_DNA"/>
</dbReference>
<dbReference type="EMBL" id="S40261">
    <property type="protein sequence ID" value="AAB22567.1"/>
    <property type="molecule type" value="Genomic_DNA"/>
</dbReference>
<dbReference type="PIR" id="S36566">
    <property type="entry name" value="S36566"/>
</dbReference>
<dbReference type="SMR" id="P36741"/>
<dbReference type="IntAct" id="P36741">
    <property type="interactions" value="1"/>
</dbReference>
<dbReference type="MINT" id="P36741"/>
<dbReference type="Proteomes" id="UP000008695">
    <property type="component" value="Genome"/>
</dbReference>
<dbReference type="GO" id="GO:0042025">
    <property type="term" value="C:host cell nucleus"/>
    <property type="evidence" value="ECO:0007669"/>
    <property type="project" value="UniProtKB-SubCell"/>
</dbReference>
<dbReference type="GO" id="GO:0039620">
    <property type="term" value="C:T=7 icosahedral viral capsid"/>
    <property type="evidence" value="ECO:0007669"/>
    <property type="project" value="UniProtKB-UniRule"/>
</dbReference>
<dbReference type="GO" id="GO:0005198">
    <property type="term" value="F:structural molecule activity"/>
    <property type="evidence" value="ECO:0007669"/>
    <property type="project" value="UniProtKB-UniRule"/>
</dbReference>
<dbReference type="GO" id="GO:0075509">
    <property type="term" value="P:endocytosis involved in viral entry into host cell"/>
    <property type="evidence" value="ECO:0007669"/>
    <property type="project" value="UniProtKB-KW"/>
</dbReference>
<dbReference type="GO" id="GO:0019062">
    <property type="term" value="P:virion attachment to host cell"/>
    <property type="evidence" value="ECO:0007669"/>
    <property type="project" value="UniProtKB-UniRule"/>
</dbReference>
<dbReference type="Gene3D" id="2.60.175.20">
    <property type="entry name" value="Major capsid L1 (late) superfamily, Papillomavirus"/>
    <property type="match status" value="2"/>
</dbReference>
<dbReference type="HAMAP" id="MF_04002">
    <property type="entry name" value="PPV_L1"/>
    <property type="match status" value="1"/>
</dbReference>
<dbReference type="InterPro" id="IPR002210">
    <property type="entry name" value="Capsid_L1_Papillomavir"/>
</dbReference>
<dbReference type="InterPro" id="IPR036973">
    <property type="entry name" value="Capsid_L1_sf_Papillomavir"/>
</dbReference>
<dbReference type="InterPro" id="IPR011222">
    <property type="entry name" value="dsDNA_vir_gr_I_capsid"/>
</dbReference>
<dbReference type="Pfam" id="PF00500">
    <property type="entry name" value="Late_protein_L1"/>
    <property type="match status" value="1"/>
</dbReference>
<dbReference type="PRINTS" id="PR00865">
    <property type="entry name" value="HPVCAPSIDL1"/>
</dbReference>
<dbReference type="SUPFAM" id="SSF88648">
    <property type="entry name" value="Group I dsDNA viruses"/>
    <property type="match status" value="1"/>
</dbReference>
<organismHost>
    <name type="scientific">Homo sapiens</name>
    <name type="common">Human</name>
    <dbReference type="NCBI Taxonomy" id="9606"/>
</organismHost>
<organism>
    <name type="scientific">Human papillomavirus 45</name>
    <dbReference type="NCBI Taxonomy" id="10593"/>
    <lineage>
        <taxon>Viruses</taxon>
        <taxon>Monodnaviria</taxon>
        <taxon>Shotokuvirae</taxon>
        <taxon>Cossaviricota</taxon>
        <taxon>Papovaviricetes</taxon>
        <taxon>Zurhausenvirales</taxon>
        <taxon>Papillomaviridae</taxon>
        <taxon>Firstpapillomavirinae</taxon>
        <taxon>Alphapapillomavirus</taxon>
        <taxon>Alphapapillomavirus 7</taxon>
    </lineage>
</organism>
<keyword id="KW-0167">Capsid protein</keyword>
<keyword id="KW-1015">Disulfide bond</keyword>
<keyword id="KW-1048">Host nucleus</keyword>
<keyword id="KW-0945">Host-virus interaction</keyword>
<keyword id="KW-0426">Late protein</keyword>
<keyword id="KW-1145">T=7 icosahedral capsid protein</keyword>
<keyword id="KW-1161">Viral attachment to host cell</keyword>
<keyword id="KW-1162">Viral penetration into host cytoplasm</keyword>
<keyword id="KW-0946">Virion</keyword>
<keyword id="KW-1164">Virus endocytosis by host</keyword>
<keyword id="KW-1160">Virus entry into host cell</keyword>
<protein>
    <recommendedName>
        <fullName evidence="1">Major capsid protein L1</fullName>
    </recommendedName>
</protein>
<gene>
    <name evidence="1" type="primary">L1</name>
</gene>
<evidence type="ECO:0000255" key="1">
    <source>
        <dbReference type="HAMAP-Rule" id="MF_04002"/>
    </source>
</evidence>
<evidence type="ECO:0000256" key="2">
    <source>
        <dbReference type="SAM" id="MobiDB-lite"/>
    </source>
</evidence>
<sequence length="539" mass="60311">MAHNIIYGHGIIIFLKNVNVFPIFLQMALWRPSDSTVYLPPPSVARVVSTDDYVSRTSIFYHAGSSRLLTVGNPYFRVVPNGAGNKQAVPKVSAYQYRVFRVALPDPNKFGLPDSTIYNPETQRLVWACVGMEIGRGQPLGIGLSGHPFYNKLDDTESAHAATAVITQDVRDNVSVDYKQTQLCILGCVPAIGEHWAKGTLCKPAQLQPGDCPPLELKNTIIEDGDMVDTGYGAMDFSTLQDTKCEVPLDICQSICKYPDYLQMSADPYGDSMFFCLRREQLFARHFWNRAGVMGDTVPTDLYIKGTSANMRETPGSCVYSPSPSGSIITSDSQLFNKPYWLHKAQGHNNGICWHNQLFVTVVDTTRSTNLTLCASTQNPVPSTYDPTKFKQYSRHVEEYDLQFIFQLCTITLTAEVMSYIHSMNSSILENWNFGVPPPPTTSLVDTYRFVQSVAVTCQKDTTPPEKQDPYDKLKFWTVDLKEKFSSDLDQYPLGRKFLVQAGLRRRPTIGPRKRPAASTSTASTASRPAKRVRIRSKK</sequence>
<proteinExistence type="inferred from homology"/>